<accession>B6HZR3</accession>
<dbReference type="EC" id="6.1.1.15" evidence="1"/>
<dbReference type="EMBL" id="AP009240">
    <property type="protein sequence ID" value="BAG75720.1"/>
    <property type="molecule type" value="Genomic_DNA"/>
</dbReference>
<dbReference type="RefSeq" id="WP_001260712.1">
    <property type="nucleotide sequence ID" value="NC_011415.1"/>
</dbReference>
<dbReference type="SMR" id="B6HZR3"/>
<dbReference type="GeneID" id="93777229"/>
<dbReference type="KEGG" id="ecy:ECSE_0196"/>
<dbReference type="HOGENOM" id="CLU_016739_0_0_6"/>
<dbReference type="Proteomes" id="UP000008199">
    <property type="component" value="Chromosome"/>
</dbReference>
<dbReference type="GO" id="GO:0005829">
    <property type="term" value="C:cytosol"/>
    <property type="evidence" value="ECO:0007669"/>
    <property type="project" value="TreeGrafter"/>
</dbReference>
<dbReference type="GO" id="GO:0002161">
    <property type="term" value="F:aminoacyl-tRNA deacylase activity"/>
    <property type="evidence" value="ECO:0007669"/>
    <property type="project" value="InterPro"/>
</dbReference>
<dbReference type="GO" id="GO:0005524">
    <property type="term" value="F:ATP binding"/>
    <property type="evidence" value="ECO:0007669"/>
    <property type="project" value="UniProtKB-UniRule"/>
</dbReference>
<dbReference type="GO" id="GO:0004827">
    <property type="term" value="F:proline-tRNA ligase activity"/>
    <property type="evidence" value="ECO:0007669"/>
    <property type="project" value="UniProtKB-UniRule"/>
</dbReference>
<dbReference type="GO" id="GO:0006433">
    <property type="term" value="P:prolyl-tRNA aminoacylation"/>
    <property type="evidence" value="ECO:0007669"/>
    <property type="project" value="UniProtKB-UniRule"/>
</dbReference>
<dbReference type="CDD" id="cd04334">
    <property type="entry name" value="ProRS-INS"/>
    <property type="match status" value="1"/>
</dbReference>
<dbReference type="CDD" id="cd00861">
    <property type="entry name" value="ProRS_anticodon_short"/>
    <property type="match status" value="1"/>
</dbReference>
<dbReference type="CDD" id="cd00779">
    <property type="entry name" value="ProRS_core_prok"/>
    <property type="match status" value="1"/>
</dbReference>
<dbReference type="FunFam" id="3.30.930.10:FF:000012">
    <property type="entry name" value="Proline--tRNA ligase"/>
    <property type="match status" value="1"/>
</dbReference>
<dbReference type="FunFam" id="3.30.930.10:FF:000097">
    <property type="entry name" value="Proline--tRNA ligase"/>
    <property type="match status" value="1"/>
</dbReference>
<dbReference type="FunFam" id="3.40.50.800:FF:000006">
    <property type="entry name" value="Proline--tRNA ligase"/>
    <property type="match status" value="1"/>
</dbReference>
<dbReference type="FunFam" id="3.90.960.10:FF:000001">
    <property type="entry name" value="Proline--tRNA ligase"/>
    <property type="match status" value="1"/>
</dbReference>
<dbReference type="Gene3D" id="3.40.50.800">
    <property type="entry name" value="Anticodon-binding domain"/>
    <property type="match status" value="1"/>
</dbReference>
<dbReference type="Gene3D" id="3.30.930.10">
    <property type="entry name" value="Bira Bifunctional Protein, Domain 2"/>
    <property type="match status" value="2"/>
</dbReference>
<dbReference type="Gene3D" id="3.90.960.10">
    <property type="entry name" value="YbaK/aminoacyl-tRNA synthetase-associated domain"/>
    <property type="match status" value="1"/>
</dbReference>
<dbReference type="HAMAP" id="MF_01569">
    <property type="entry name" value="Pro_tRNA_synth_type1"/>
    <property type="match status" value="1"/>
</dbReference>
<dbReference type="InterPro" id="IPR002314">
    <property type="entry name" value="aa-tRNA-synt_IIb"/>
</dbReference>
<dbReference type="InterPro" id="IPR006195">
    <property type="entry name" value="aa-tRNA-synth_II"/>
</dbReference>
<dbReference type="InterPro" id="IPR045864">
    <property type="entry name" value="aa-tRNA-synth_II/BPL/LPL"/>
</dbReference>
<dbReference type="InterPro" id="IPR004154">
    <property type="entry name" value="Anticodon-bd"/>
</dbReference>
<dbReference type="InterPro" id="IPR036621">
    <property type="entry name" value="Anticodon-bd_dom_sf"/>
</dbReference>
<dbReference type="InterPro" id="IPR002316">
    <property type="entry name" value="Pro-tRNA-ligase_IIa"/>
</dbReference>
<dbReference type="InterPro" id="IPR004500">
    <property type="entry name" value="Pro-tRNA-synth_IIa_bac-type"/>
</dbReference>
<dbReference type="InterPro" id="IPR023717">
    <property type="entry name" value="Pro-tRNA-Synthase_IIa_type1"/>
</dbReference>
<dbReference type="InterPro" id="IPR050062">
    <property type="entry name" value="Pro-tRNA_synthetase"/>
</dbReference>
<dbReference type="InterPro" id="IPR044140">
    <property type="entry name" value="ProRS_anticodon_short"/>
</dbReference>
<dbReference type="InterPro" id="IPR033730">
    <property type="entry name" value="ProRS_core_prok"/>
</dbReference>
<dbReference type="InterPro" id="IPR036754">
    <property type="entry name" value="YbaK/aa-tRNA-synt-asso_dom_sf"/>
</dbReference>
<dbReference type="InterPro" id="IPR007214">
    <property type="entry name" value="YbaK/aa-tRNA-synth-assoc-dom"/>
</dbReference>
<dbReference type="NCBIfam" id="NF006625">
    <property type="entry name" value="PRK09194.1"/>
    <property type="match status" value="1"/>
</dbReference>
<dbReference type="NCBIfam" id="TIGR00409">
    <property type="entry name" value="proS_fam_II"/>
    <property type="match status" value="1"/>
</dbReference>
<dbReference type="PANTHER" id="PTHR42753">
    <property type="entry name" value="MITOCHONDRIAL RIBOSOME PROTEIN L39/PROLYL-TRNA LIGASE FAMILY MEMBER"/>
    <property type="match status" value="1"/>
</dbReference>
<dbReference type="PANTHER" id="PTHR42753:SF2">
    <property type="entry name" value="PROLINE--TRNA LIGASE"/>
    <property type="match status" value="1"/>
</dbReference>
<dbReference type="Pfam" id="PF03129">
    <property type="entry name" value="HGTP_anticodon"/>
    <property type="match status" value="1"/>
</dbReference>
<dbReference type="Pfam" id="PF00587">
    <property type="entry name" value="tRNA-synt_2b"/>
    <property type="match status" value="1"/>
</dbReference>
<dbReference type="Pfam" id="PF04073">
    <property type="entry name" value="tRNA_edit"/>
    <property type="match status" value="1"/>
</dbReference>
<dbReference type="PIRSF" id="PIRSF001535">
    <property type="entry name" value="ProRS_1"/>
    <property type="match status" value="1"/>
</dbReference>
<dbReference type="PRINTS" id="PR01046">
    <property type="entry name" value="TRNASYNTHPRO"/>
</dbReference>
<dbReference type="SUPFAM" id="SSF52954">
    <property type="entry name" value="Class II aaRS ABD-related"/>
    <property type="match status" value="1"/>
</dbReference>
<dbReference type="SUPFAM" id="SSF55681">
    <property type="entry name" value="Class II aaRS and biotin synthetases"/>
    <property type="match status" value="1"/>
</dbReference>
<dbReference type="SUPFAM" id="SSF55826">
    <property type="entry name" value="YbaK/ProRS associated domain"/>
    <property type="match status" value="1"/>
</dbReference>
<dbReference type="PROSITE" id="PS50862">
    <property type="entry name" value="AA_TRNA_LIGASE_II"/>
    <property type="match status" value="1"/>
</dbReference>
<protein>
    <recommendedName>
        <fullName evidence="1">Proline--tRNA ligase</fullName>
        <ecNumber evidence="1">6.1.1.15</ecNumber>
    </recommendedName>
    <alternativeName>
        <fullName evidence="1">Prolyl-tRNA synthetase</fullName>
        <shortName evidence="1">ProRS</shortName>
    </alternativeName>
</protein>
<evidence type="ECO:0000255" key="1">
    <source>
        <dbReference type="HAMAP-Rule" id="MF_01569"/>
    </source>
</evidence>
<keyword id="KW-0030">Aminoacyl-tRNA synthetase</keyword>
<keyword id="KW-0067">ATP-binding</keyword>
<keyword id="KW-0963">Cytoplasm</keyword>
<keyword id="KW-0436">Ligase</keyword>
<keyword id="KW-0547">Nucleotide-binding</keyword>
<keyword id="KW-0648">Protein biosynthesis</keyword>
<organism>
    <name type="scientific">Escherichia coli (strain SE11)</name>
    <dbReference type="NCBI Taxonomy" id="409438"/>
    <lineage>
        <taxon>Bacteria</taxon>
        <taxon>Pseudomonadati</taxon>
        <taxon>Pseudomonadota</taxon>
        <taxon>Gammaproteobacteria</taxon>
        <taxon>Enterobacterales</taxon>
        <taxon>Enterobacteriaceae</taxon>
        <taxon>Escherichia</taxon>
    </lineage>
</organism>
<comment type="function">
    <text evidence="1">Catalyzes the attachment of proline to tRNA(Pro) in a two-step reaction: proline is first activated by ATP to form Pro-AMP and then transferred to the acceptor end of tRNA(Pro). As ProRS can inadvertently accommodate and process non-cognate amino acids such as alanine and cysteine, to avoid such errors it has two additional distinct editing activities against alanine. One activity is designated as 'pretransfer' editing and involves the tRNA(Pro)-independent hydrolysis of activated Ala-AMP. The other activity is designated 'posttransfer' editing and involves deacylation of mischarged Ala-tRNA(Pro). The misacylated Cys-tRNA(Pro) is not edited by ProRS.</text>
</comment>
<comment type="catalytic activity">
    <reaction evidence="1">
        <text>tRNA(Pro) + L-proline + ATP = L-prolyl-tRNA(Pro) + AMP + diphosphate</text>
        <dbReference type="Rhea" id="RHEA:14305"/>
        <dbReference type="Rhea" id="RHEA-COMP:9700"/>
        <dbReference type="Rhea" id="RHEA-COMP:9702"/>
        <dbReference type="ChEBI" id="CHEBI:30616"/>
        <dbReference type="ChEBI" id="CHEBI:33019"/>
        <dbReference type="ChEBI" id="CHEBI:60039"/>
        <dbReference type="ChEBI" id="CHEBI:78442"/>
        <dbReference type="ChEBI" id="CHEBI:78532"/>
        <dbReference type="ChEBI" id="CHEBI:456215"/>
        <dbReference type="EC" id="6.1.1.15"/>
    </reaction>
</comment>
<comment type="subunit">
    <text evidence="1">Homodimer.</text>
</comment>
<comment type="subcellular location">
    <subcellularLocation>
        <location evidence="1">Cytoplasm</location>
    </subcellularLocation>
</comment>
<comment type="domain">
    <text evidence="1">Consists of three domains: the N-terminal catalytic domain, the editing domain and the C-terminal anticodon-binding domain.</text>
</comment>
<comment type="similarity">
    <text evidence="1">Belongs to the class-II aminoacyl-tRNA synthetase family. ProS type 1 subfamily.</text>
</comment>
<feature type="chain" id="PRO_1000199378" description="Proline--tRNA ligase">
    <location>
        <begin position="1"/>
        <end position="572"/>
    </location>
</feature>
<reference key="1">
    <citation type="journal article" date="2008" name="DNA Res.">
        <title>Complete genome sequence and comparative analysis of the wild-type commensal Escherichia coli strain SE11 isolated from a healthy adult.</title>
        <authorList>
            <person name="Oshima K."/>
            <person name="Toh H."/>
            <person name="Ogura Y."/>
            <person name="Sasamoto H."/>
            <person name="Morita H."/>
            <person name="Park S.-H."/>
            <person name="Ooka T."/>
            <person name="Iyoda S."/>
            <person name="Taylor T.D."/>
            <person name="Hayashi T."/>
            <person name="Itoh K."/>
            <person name="Hattori M."/>
        </authorList>
    </citation>
    <scope>NUCLEOTIDE SEQUENCE [LARGE SCALE GENOMIC DNA]</scope>
    <source>
        <strain>SE11</strain>
    </source>
</reference>
<proteinExistence type="inferred from homology"/>
<name>SYP_ECOSE</name>
<sequence length="572" mass="63623">MRTSQYLLSTLKETPADAEVISHQLMLRAGMIRKLASGLYTWLPTGVRVLKKVENIVREEMNNAGAIEVSMPVVQPADLWQESGRWEQYGPELLRFVDRGERPFVLGPTHEEVITDLIRNELSSYKQLPLNFYQIQTKFRDEVRPRFGVMRSREFLMKDAYSFHTSQESLQETYDAMYAAYSKIFSRMGLDFRAVQADTGSIGGSASHEFQVLAQSGEDDVVFSDTSDYAANIELAEAIAPKEPRAAATQEMTLVDTPNAKTIAELVEQFNLPIEKTVKTLLVKAVEGSSFPLVALLVRGDHELNEVKAEKLPQVASPLTFATEEEIRAVVKAGPGSLGPVNMPIPVVIDRTVAAMSDFAAGANIDGKHYFGINWDRDVATPEVADIRNVVAGDPSPDGQGTLLIKRGIEVGHIFQLGTKYSEALKASVQGEDGRNQILTMGCYGIGVTRVVAAAIEQNYDERGIVWPDAIAPFQVAILPMNMHKSFRVQELAEKLYSELRAQGIEVLLDDRKERPGVMFADMELIGIPHTIVLGDRNLDNDDIEYKYRRNGEKQLIKTGDIVEYLVKQIKG</sequence>
<gene>
    <name evidence="1" type="primary">proS</name>
    <name type="ordered locus">ECSE_0196</name>
</gene>